<feature type="chain" id="PRO_0000226075" description="ABC transporter C family member 4">
    <location>
        <begin position="1"/>
        <end position="1516"/>
    </location>
</feature>
<feature type="transmembrane region" description="Helical" evidence="3">
    <location>
        <begin position="46"/>
        <end position="66"/>
    </location>
</feature>
<feature type="transmembrane region" description="Helical" evidence="3">
    <location>
        <begin position="103"/>
        <end position="123"/>
    </location>
</feature>
<feature type="transmembrane region" description="Helical" evidence="3">
    <location>
        <begin position="133"/>
        <end position="153"/>
    </location>
</feature>
<feature type="transmembrane region" description="Helical" evidence="3">
    <location>
        <begin position="170"/>
        <end position="190"/>
    </location>
</feature>
<feature type="transmembrane region" description="Helical" evidence="3">
    <location>
        <begin position="203"/>
        <end position="223"/>
    </location>
</feature>
<feature type="transmembrane region" description="Helical" evidence="3">
    <location>
        <begin position="326"/>
        <end position="346"/>
    </location>
</feature>
<feature type="transmembrane region" description="Helical" evidence="3">
    <location>
        <begin position="361"/>
        <end position="381"/>
    </location>
</feature>
<feature type="transmembrane region" description="Helical" evidence="3">
    <location>
        <begin position="439"/>
        <end position="459"/>
    </location>
</feature>
<feature type="transmembrane region" description="Helical" evidence="3">
    <location>
        <begin position="463"/>
        <end position="483"/>
    </location>
</feature>
<feature type="transmembrane region" description="Helical" evidence="3">
    <location>
        <begin position="551"/>
        <end position="571"/>
    </location>
</feature>
<feature type="transmembrane region" description="Helical" evidence="3">
    <location>
        <begin position="953"/>
        <end position="973"/>
    </location>
</feature>
<feature type="transmembrane region" description="Helical" evidence="3">
    <location>
        <begin position="992"/>
        <end position="1012"/>
    </location>
</feature>
<feature type="transmembrane region" description="Helical" evidence="3">
    <location>
        <begin position="1067"/>
        <end position="1087"/>
    </location>
</feature>
<feature type="transmembrane region" description="Helical" evidence="3">
    <location>
        <begin position="1089"/>
        <end position="1109"/>
    </location>
</feature>
<feature type="transmembrane region" description="Helical" evidence="3">
    <location>
        <begin position="1186"/>
        <end position="1206"/>
    </location>
</feature>
<feature type="transmembrane region" description="Helical" evidence="3">
    <location>
        <begin position="1211"/>
        <end position="1231"/>
    </location>
</feature>
<feature type="domain" description="ABC transmembrane type-1 1" evidence="3">
    <location>
        <begin position="326"/>
        <end position="607"/>
    </location>
</feature>
<feature type="domain" description="ABC transporter 1" evidence="2">
    <location>
        <begin position="641"/>
        <end position="864"/>
    </location>
</feature>
<feature type="domain" description="ABC transmembrane type-1 2" evidence="3">
    <location>
        <begin position="957"/>
        <end position="1237"/>
    </location>
</feature>
<feature type="domain" description="ABC transporter 2" evidence="2">
    <location>
        <begin position="1274"/>
        <end position="1508"/>
    </location>
</feature>
<feature type="region of interest" description="Disordered" evidence="4">
    <location>
        <begin position="879"/>
        <end position="904"/>
    </location>
</feature>
<feature type="compositionally biased region" description="Polar residues" evidence="4">
    <location>
        <begin position="884"/>
        <end position="901"/>
    </location>
</feature>
<feature type="binding site" evidence="2">
    <location>
        <begin position="676"/>
        <end position="683"/>
    </location>
    <ligand>
        <name>ATP</name>
        <dbReference type="ChEBI" id="CHEBI:30616"/>
        <label>1</label>
    </ligand>
</feature>
<feature type="binding site" evidence="2">
    <location>
        <begin position="1308"/>
        <end position="1315"/>
    </location>
    <ligand>
        <name>ATP</name>
        <dbReference type="ChEBI" id="CHEBI:30616"/>
        <label>2</label>
    </ligand>
</feature>
<feature type="sequence conflict" description="In Ref. 5; BAE98764." evidence="10" ref="5">
    <original>F</original>
    <variation>L</variation>
    <location>
        <position position="1234"/>
    </location>
</feature>
<feature type="sequence conflict" description="In Ref. 5; BAE98764." evidence="10" ref="5">
    <original>T</original>
    <variation>I</variation>
    <location>
        <position position="1295"/>
    </location>
</feature>
<dbReference type="EC" id="7.6.2.2"/>
<dbReference type="EMBL" id="AJ002584">
    <property type="protein sequence ID" value="CAA05625.1"/>
    <property type="molecule type" value="Genomic_DNA"/>
</dbReference>
<dbReference type="EMBL" id="AF243509">
    <property type="protein sequence ID" value="AAF68441.1"/>
    <property type="molecule type" value="mRNA"/>
</dbReference>
<dbReference type="EMBL" id="AC005309">
    <property type="protein sequence ID" value="AAC63634.1"/>
    <property type="molecule type" value="Genomic_DNA"/>
</dbReference>
<dbReference type="EMBL" id="CP002685">
    <property type="protein sequence ID" value="AEC10889.1"/>
    <property type="molecule type" value="Genomic_DNA"/>
</dbReference>
<dbReference type="EMBL" id="AK226656">
    <property type="protein sequence ID" value="BAE98764.1"/>
    <property type="molecule type" value="mRNA"/>
</dbReference>
<dbReference type="EMBL" id="U96399">
    <property type="protein sequence ID" value="AAC49797.1"/>
    <property type="molecule type" value="mRNA"/>
</dbReference>
<dbReference type="PIR" id="F84919">
    <property type="entry name" value="F84919"/>
</dbReference>
<dbReference type="RefSeq" id="NP_182301.1">
    <property type="nucleotide sequence ID" value="NM_130347.5"/>
</dbReference>
<dbReference type="SMR" id="Q7DM58"/>
<dbReference type="BioGRID" id="4727">
    <property type="interactions" value="1"/>
</dbReference>
<dbReference type="FunCoup" id="Q7DM58">
    <property type="interactions" value="35"/>
</dbReference>
<dbReference type="IntAct" id="Q7DM58">
    <property type="interactions" value="1"/>
</dbReference>
<dbReference type="STRING" id="3702.Q7DM58"/>
<dbReference type="iPTMnet" id="Q7DM58"/>
<dbReference type="PaxDb" id="3702-AT2G47800.1"/>
<dbReference type="ProteomicsDB" id="244376"/>
<dbReference type="EnsemblPlants" id="AT2G47800.1">
    <property type="protein sequence ID" value="AT2G47800.1"/>
    <property type="gene ID" value="AT2G47800"/>
</dbReference>
<dbReference type="GeneID" id="819392"/>
<dbReference type="Gramene" id="AT2G47800.1">
    <property type="protein sequence ID" value="AT2G47800.1"/>
    <property type="gene ID" value="AT2G47800"/>
</dbReference>
<dbReference type="KEGG" id="ath:AT2G47800"/>
<dbReference type="Araport" id="AT2G47800"/>
<dbReference type="TAIR" id="AT2G47800">
    <property type="gene designation" value="ABCC4"/>
</dbReference>
<dbReference type="eggNOG" id="KOG0054">
    <property type="taxonomic scope" value="Eukaryota"/>
</dbReference>
<dbReference type="HOGENOM" id="CLU_000604_27_1_1"/>
<dbReference type="InParanoid" id="Q7DM58"/>
<dbReference type="OMA" id="CPQDWPS"/>
<dbReference type="PhylomeDB" id="Q7DM58"/>
<dbReference type="BioCyc" id="ARA:AT2G47800-MONOMER"/>
<dbReference type="PRO" id="PR:Q7DM58"/>
<dbReference type="Proteomes" id="UP000006548">
    <property type="component" value="Chromosome 2"/>
</dbReference>
<dbReference type="ExpressionAtlas" id="Q7DM58">
    <property type="expression patterns" value="baseline and differential"/>
</dbReference>
<dbReference type="GO" id="GO:0005829">
    <property type="term" value="C:cytosol"/>
    <property type="evidence" value="ECO:0007005"/>
    <property type="project" value="TAIR"/>
</dbReference>
<dbReference type="GO" id="GO:0005794">
    <property type="term" value="C:Golgi apparatus"/>
    <property type="evidence" value="ECO:0007005"/>
    <property type="project" value="TAIR"/>
</dbReference>
<dbReference type="GO" id="GO:0000325">
    <property type="term" value="C:plant-type vacuole"/>
    <property type="evidence" value="ECO:0007005"/>
    <property type="project" value="TAIR"/>
</dbReference>
<dbReference type="GO" id="GO:0005886">
    <property type="term" value="C:plasma membrane"/>
    <property type="evidence" value="ECO:0000314"/>
    <property type="project" value="TAIR"/>
</dbReference>
<dbReference type="GO" id="GO:0009506">
    <property type="term" value="C:plasmodesma"/>
    <property type="evidence" value="ECO:0007005"/>
    <property type="project" value="TAIR"/>
</dbReference>
<dbReference type="GO" id="GO:0005774">
    <property type="term" value="C:vacuolar membrane"/>
    <property type="evidence" value="ECO:0007005"/>
    <property type="project" value="TAIR"/>
</dbReference>
<dbReference type="GO" id="GO:0005773">
    <property type="term" value="C:vacuole"/>
    <property type="evidence" value="ECO:0007005"/>
    <property type="project" value="TAIR"/>
</dbReference>
<dbReference type="GO" id="GO:0008559">
    <property type="term" value="F:ABC-type xenobiotic transporter activity"/>
    <property type="evidence" value="ECO:0007669"/>
    <property type="project" value="UniProtKB-EC"/>
</dbReference>
<dbReference type="GO" id="GO:0005524">
    <property type="term" value="F:ATP binding"/>
    <property type="evidence" value="ECO:0007669"/>
    <property type="project" value="UniProtKB-KW"/>
</dbReference>
<dbReference type="GO" id="GO:0016887">
    <property type="term" value="F:ATP hydrolysis activity"/>
    <property type="evidence" value="ECO:0007669"/>
    <property type="project" value="InterPro"/>
</dbReference>
<dbReference type="GO" id="GO:0042626">
    <property type="term" value="F:ATPase-coupled transmembrane transporter activity"/>
    <property type="evidence" value="ECO:0000250"/>
    <property type="project" value="TAIR"/>
</dbReference>
<dbReference type="GO" id="GO:0009624">
    <property type="term" value="P:response to nematode"/>
    <property type="evidence" value="ECO:0007007"/>
    <property type="project" value="TAIR"/>
</dbReference>
<dbReference type="GO" id="GO:0009414">
    <property type="term" value="P:response to water deprivation"/>
    <property type="evidence" value="ECO:0000315"/>
    <property type="project" value="TAIR"/>
</dbReference>
<dbReference type="GO" id="GO:0009611">
    <property type="term" value="P:response to wounding"/>
    <property type="evidence" value="ECO:0000270"/>
    <property type="project" value="TAIR"/>
</dbReference>
<dbReference type="GO" id="GO:0010118">
    <property type="term" value="P:stomatal movement"/>
    <property type="evidence" value="ECO:0000315"/>
    <property type="project" value="TAIR"/>
</dbReference>
<dbReference type="CDD" id="cd18579">
    <property type="entry name" value="ABC_6TM_ABCC_D1"/>
    <property type="match status" value="1"/>
</dbReference>
<dbReference type="CDD" id="cd18580">
    <property type="entry name" value="ABC_6TM_ABCC_D2"/>
    <property type="match status" value="1"/>
</dbReference>
<dbReference type="CDD" id="cd03250">
    <property type="entry name" value="ABCC_MRP_domain1"/>
    <property type="match status" value="1"/>
</dbReference>
<dbReference type="CDD" id="cd03244">
    <property type="entry name" value="ABCC_MRP_domain2"/>
    <property type="match status" value="1"/>
</dbReference>
<dbReference type="FunFam" id="1.20.1560.10:FF:000003">
    <property type="entry name" value="ABC transporter C family member 10"/>
    <property type="match status" value="1"/>
</dbReference>
<dbReference type="FunFam" id="3.40.50.300:FF:000169">
    <property type="entry name" value="ABC transporter C family member 3"/>
    <property type="match status" value="1"/>
</dbReference>
<dbReference type="FunFam" id="3.40.50.300:FF:001048">
    <property type="entry name" value="ABC transporter C family member 4"/>
    <property type="match status" value="1"/>
</dbReference>
<dbReference type="FunFam" id="1.20.1560.10:FF:000002">
    <property type="entry name" value="ABC transporter C family member 5"/>
    <property type="match status" value="1"/>
</dbReference>
<dbReference type="Gene3D" id="1.20.1560.10">
    <property type="entry name" value="ABC transporter type 1, transmembrane domain"/>
    <property type="match status" value="2"/>
</dbReference>
<dbReference type="Gene3D" id="3.40.50.300">
    <property type="entry name" value="P-loop containing nucleotide triphosphate hydrolases"/>
    <property type="match status" value="2"/>
</dbReference>
<dbReference type="InterPro" id="IPR003593">
    <property type="entry name" value="AAA+_ATPase"/>
</dbReference>
<dbReference type="InterPro" id="IPR011527">
    <property type="entry name" value="ABC1_TM_dom"/>
</dbReference>
<dbReference type="InterPro" id="IPR036640">
    <property type="entry name" value="ABC1_TM_sf"/>
</dbReference>
<dbReference type="InterPro" id="IPR003439">
    <property type="entry name" value="ABC_transporter-like_ATP-bd"/>
</dbReference>
<dbReference type="InterPro" id="IPR017871">
    <property type="entry name" value="ABC_transporter-like_CS"/>
</dbReference>
<dbReference type="InterPro" id="IPR050173">
    <property type="entry name" value="ABC_transporter_C-like"/>
</dbReference>
<dbReference type="InterPro" id="IPR044746">
    <property type="entry name" value="ABCC_6TM_D1"/>
</dbReference>
<dbReference type="InterPro" id="IPR044726">
    <property type="entry name" value="ABCC_6TM_D2"/>
</dbReference>
<dbReference type="InterPro" id="IPR027417">
    <property type="entry name" value="P-loop_NTPase"/>
</dbReference>
<dbReference type="PANTHER" id="PTHR24223:SF362">
    <property type="entry name" value="ABC TRANSPORTER C FAMILY MEMBER 4"/>
    <property type="match status" value="1"/>
</dbReference>
<dbReference type="PANTHER" id="PTHR24223">
    <property type="entry name" value="ATP-BINDING CASSETTE SUB-FAMILY C"/>
    <property type="match status" value="1"/>
</dbReference>
<dbReference type="Pfam" id="PF00664">
    <property type="entry name" value="ABC_membrane"/>
    <property type="match status" value="2"/>
</dbReference>
<dbReference type="Pfam" id="PF00005">
    <property type="entry name" value="ABC_tran"/>
    <property type="match status" value="2"/>
</dbReference>
<dbReference type="SMART" id="SM00382">
    <property type="entry name" value="AAA"/>
    <property type="match status" value="2"/>
</dbReference>
<dbReference type="SUPFAM" id="SSF90123">
    <property type="entry name" value="ABC transporter transmembrane region"/>
    <property type="match status" value="2"/>
</dbReference>
<dbReference type="SUPFAM" id="SSF52540">
    <property type="entry name" value="P-loop containing nucleoside triphosphate hydrolases"/>
    <property type="match status" value="2"/>
</dbReference>
<dbReference type="PROSITE" id="PS50929">
    <property type="entry name" value="ABC_TM1F"/>
    <property type="match status" value="2"/>
</dbReference>
<dbReference type="PROSITE" id="PS00211">
    <property type="entry name" value="ABC_TRANSPORTER_1"/>
    <property type="match status" value="1"/>
</dbReference>
<dbReference type="PROSITE" id="PS50893">
    <property type="entry name" value="ABC_TRANSPORTER_2"/>
    <property type="match status" value="2"/>
</dbReference>
<sequence length="1516" mass="169080">MWLLSSSPWLSELSCSYSAVVEHTSSVPVPIQWLRFVLLSPCPQRALFSAVDFIFLLCFALHKLFSSPSSSSEINGHAEIRKPLIGIRGRTPTRTTAWFKTTVAVTVLLSFCSVVLCVLAFTGKRRTQRPWNLIDPLFWLIHAVTHLVIAVLVLHQKRFAALNHPLSLRIYWISSFVLTSLFAVTGIFHFLSDAATSLRAEDVASFFSFPLTAFLLIASVRGITGLVTAETNSPTKPSDAVSVEKSDNVSLYASASVFSKTFWLWMNPLLSKGYKSPLTLEQVPTLSPEHKAERLALLFESSWPKPSENSSHPIRTTLLRCFWKEILFTAILAIVRLGVMYVGPVLIQSFVDFTSGKRSSPWQGYYLVLILLVAKFVEVLTTHQFNFDSQKLGMLIRSTLITALYKKGLKLTGSARQNHGVGQIVNYMAVDAQQLSDMMLQLHAIWLMPLQVTVALVLLYGSLGASVITAVIGLTGVFVFILLGTQRNNGYQFSLMGNRDSRMKATNEMLNYMRVIKFQAWENHFNKRILKFRDMEFGWLSKFLYSIAGNIIVLWSTPVLISALTFATALALGVKLDAGTVFTTTTIFKILQEPIRTFPQSMISLSQAMISLGRLDSYMMSKELSEDAVERALGCDGNTAVEVRDGSFSWDDEDNEPALSDINFKVKKGELTAIVGTVGSGKSSLLASVLGEMHRISGQVRVCGSTGYVAQTSWIENGTVQDNILFGLPMVREKYNKVLNVCSLEKDLQMMEFGDKTEIGERGINLSGGQKQRIQLARAVYQECDVYLLDDVFSAVDAHTGSDIFKKCVRGALKGKTVLLVTHQVDFLHNVDCILVMRDGKIVESGKYDELVSSGLDFGELVAAHETSMELVEAGADSAAVATSPRTPTSPHASSPRTSMESPHLSDLNDEHIKSFLGSHIVEDGSKLIKEEERETGQVSLGVYKQYCTEAYGWWGIVLVLFFSLTWQGSLMASDYWLAYETSAKNAISFDASVFILGYVIIALVSIVLVSIRSYYVTHLGLKTAQIFFRQILNSILHAPMSFFDTTPSGRILSRASTDQTNVDILIPFMLGLVVSMYTTLLSIFIVTCQYAWPTAFFVIPLGWLNIWYRNYYLASSRELTRMDSITKAPIIHHFSESIAGVMTIRSFRKQELFRQENVKRVNDNLRMDFHNNGSNEWLGFRLELVGSWVLCISALFMVLLPSNVIRPENVGLSLSYGLSLNSVLFFAIYMSCFVENKMVSVERIKQFTDIPSESEWERKETLPPSNWPFHGNVHLEDLKVRYRPNTPLVLKGITLDIKGGEKVGVVGRTGSGKSTLIQVLFRLVEPSGGKIIIDGIDISTLGLHDLRSRFGIIPQEPVLFEGTVRSNIDPTEQYSDEEIWKSLERCQLKDVVATKPEKLDSLVVDNGENWSVGQRQLLCLGRVMLKRSRLLFLDEATASVDSQTDAVIQKIIREDFASCTIISIAHRIPTVMDGDRVLVIDAGKAKEFDSPARLLERPSLFAALVQEYALRSAGI</sequence>
<comment type="function">
    <text evidence="6">Involved in the regulation of stomatal aperture. May function as a high-capacity pump for folates.</text>
</comment>
<comment type="catalytic activity">
    <reaction>
        <text>ATP + H2O + xenobioticSide 1 = ADP + phosphate + xenobioticSide 2.</text>
        <dbReference type="EC" id="7.6.2.2"/>
    </reaction>
</comment>
<comment type="activity regulation">
    <text evidence="6">Inhibited by methotrexate.</text>
</comment>
<comment type="subcellular location">
    <subcellularLocation>
        <location evidence="6">Cell membrane</location>
        <topology evidence="1">Multi-pass membrane protein</topology>
    </subcellularLocation>
    <subcellularLocation>
        <location evidence="7">Vacuole membrane</location>
        <topology evidence="1">Multi-pass membrane protein</topology>
    </subcellularLocation>
</comment>
<comment type="tissue specificity">
    <text evidence="5 6">Ubiquitous. High expression in the guard cells.</text>
</comment>
<comment type="induction">
    <text evidence="5 8 9">By salicylic acid (SA), menadione and, to a lower extent, by 1-chloro-2,4-dinitrobenzene (CDNB), benoxacor, cloquintocet, fenchlorazol and fluorazol.</text>
</comment>
<comment type="disruption phenotype">
    <text evidence="6">Plants have larger stomatal aperture and increased drought susceptibility, but are not affected by the ABA signal transduction pathway.</text>
</comment>
<comment type="similarity">
    <text evidence="10">Belongs to the ABC transporter superfamily. ABCC family. Conjugate transporter (TC 3.A.1.208) subfamily.</text>
</comment>
<name>AB4C_ARATH</name>
<accession>Q7DM58</accession>
<accession>O24525</accession>
<accession>Q0WVT4</accession>
<organism>
    <name type="scientific">Arabidopsis thaliana</name>
    <name type="common">Mouse-ear cress</name>
    <dbReference type="NCBI Taxonomy" id="3702"/>
    <lineage>
        <taxon>Eukaryota</taxon>
        <taxon>Viridiplantae</taxon>
        <taxon>Streptophyta</taxon>
        <taxon>Embryophyta</taxon>
        <taxon>Tracheophyta</taxon>
        <taxon>Spermatophyta</taxon>
        <taxon>Magnoliopsida</taxon>
        <taxon>eudicotyledons</taxon>
        <taxon>Gunneridae</taxon>
        <taxon>Pentapetalae</taxon>
        <taxon>rosids</taxon>
        <taxon>malvids</taxon>
        <taxon>Brassicales</taxon>
        <taxon>Brassicaceae</taxon>
        <taxon>Camelineae</taxon>
        <taxon>Arabidopsis</taxon>
    </lineage>
</organism>
<protein>
    <recommendedName>
        <fullName>ABC transporter C family member 4</fullName>
        <shortName>ABC transporter ABCC.4</shortName>
        <shortName>AtABCC4</shortName>
        <ecNumber>7.6.2.2</ecNumber>
    </recommendedName>
    <alternativeName>
        <fullName>ATP-energized glutathione S-conjugate pump 4</fullName>
    </alternativeName>
    <alternativeName>
        <fullName>Glutathione S-conjugate-transporting ATPase 4</fullName>
    </alternativeName>
    <alternativeName>
        <fullName>Multidrug resistance-associated protein 4</fullName>
    </alternativeName>
</protein>
<keyword id="KW-0067">ATP-binding</keyword>
<keyword id="KW-1003">Cell membrane</keyword>
<keyword id="KW-0472">Membrane</keyword>
<keyword id="KW-0547">Nucleotide-binding</keyword>
<keyword id="KW-1185">Reference proteome</keyword>
<keyword id="KW-0677">Repeat</keyword>
<keyword id="KW-1278">Translocase</keyword>
<keyword id="KW-0812">Transmembrane</keyword>
<keyword id="KW-1133">Transmembrane helix</keyword>
<keyword id="KW-0813">Transport</keyword>
<keyword id="KW-0926">Vacuole</keyword>
<proteinExistence type="evidence at protein level"/>
<gene>
    <name type="primary">ABCC4</name>
    <name type="synonym">EST3</name>
    <name type="synonym">MRP4</name>
    <name type="ordered locus">At2g47800</name>
    <name type="ORF">F17A22.19</name>
</gene>
<reference key="1">
    <citation type="journal article" date="1998" name="Mol. Gen. Genet.">
        <title>Cloning and expression analyses of the AtMRP4, a novel MRP-like gene from Arabidopsis thaliana.</title>
        <authorList>
            <person name="Sanchez-Fernandez R."/>
            <person name="Ardiles-Diaz W."/>
            <person name="Van Montagu M."/>
            <person name="Inze D."/>
            <person name="May M.J."/>
        </authorList>
    </citation>
    <scope>NUCLEOTIDE SEQUENCE [GENOMIC DNA]</scope>
    <scope>INDUCTION</scope>
</reference>
<reference key="2">
    <citation type="submission" date="2000-03" db="EMBL/GenBank/DDBJ databases">
        <title>AtMRP4 gene of Arabidopsis encodes a glutathione S-conjugate pump.</title>
        <authorList>
            <person name="Sanchez-Fernandez R."/>
            <person name="Rea P.A."/>
        </authorList>
    </citation>
    <scope>NUCLEOTIDE SEQUENCE [MRNA]</scope>
    <source>
        <strain>cv. Columbia</strain>
    </source>
</reference>
<reference key="3">
    <citation type="journal article" date="1999" name="Nature">
        <title>Sequence and analysis of chromosome 2 of the plant Arabidopsis thaliana.</title>
        <authorList>
            <person name="Lin X."/>
            <person name="Kaul S."/>
            <person name="Rounsley S.D."/>
            <person name="Shea T.P."/>
            <person name="Benito M.-I."/>
            <person name="Town C.D."/>
            <person name="Fujii C.Y."/>
            <person name="Mason T.M."/>
            <person name="Bowman C.L."/>
            <person name="Barnstead M.E."/>
            <person name="Feldblyum T.V."/>
            <person name="Buell C.R."/>
            <person name="Ketchum K.A."/>
            <person name="Lee J.J."/>
            <person name="Ronning C.M."/>
            <person name="Koo H.L."/>
            <person name="Moffat K.S."/>
            <person name="Cronin L.A."/>
            <person name="Shen M."/>
            <person name="Pai G."/>
            <person name="Van Aken S."/>
            <person name="Umayam L."/>
            <person name="Tallon L.J."/>
            <person name="Gill J.E."/>
            <person name="Adams M.D."/>
            <person name="Carrera A.J."/>
            <person name="Creasy T.H."/>
            <person name="Goodman H.M."/>
            <person name="Somerville C.R."/>
            <person name="Copenhaver G.P."/>
            <person name="Preuss D."/>
            <person name="Nierman W.C."/>
            <person name="White O."/>
            <person name="Eisen J.A."/>
            <person name="Salzberg S.L."/>
            <person name="Fraser C.M."/>
            <person name="Venter J.C."/>
        </authorList>
    </citation>
    <scope>NUCLEOTIDE SEQUENCE [LARGE SCALE GENOMIC DNA]</scope>
    <source>
        <strain>cv. Columbia</strain>
    </source>
</reference>
<reference key="4">
    <citation type="journal article" date="2017" name="Plant J.">
        <title>Araport11: a complete reannotation of the Arabidopsis thaliana reference genome.</title>
        <authorList>
            <person name="Cheng C.Y."/>
            <person name="Krishnakumar V."/>
            <person name="Chan A.P."/>
            <person name="Thibaud-Nissen F."/>
            <person name="Schobel S."/>
            <person name="Town C.D."/>
        </authorList>
    </citation>
    <scope>GENOME REANNOTATION</scope>
    <source>
        <strain>cv. Columbia</strain>
    </source>
</reference>
<reference key="5">
    <citation type="submission" date="2006-07" db="EMBL/GenBank/DDBJ databases">
        <title>Large-scale analysis of RIKEN Arabidopsis full-length (RAFL) cDNAs.</title>
        <authorList>
            <person name="Totoki Y."/>
            <person name="Seki M."/>
            <person name="Ishida J."/>
            <person name="Nakajima M."/>
            <person name="Enju A."/>
            <person name="Kamiya A."/>
            <person name="Narusaka M."/>
            <person name="Shin-i T."/>
            <person name="Nakagawa M."/>
            <person name="Sakamoto N."/>
            <person name="Oishi K."/>
            <person name="Kohara Y."/>
            <person name="Kobayashi M."/>
            <person name="Toyoda A."/>
            <person name="Sakaki Y."/>
            <person name="Sakurai T."/>
            <person name="Iida K."/>
            <person name="Akiyama K."/>
            <person name="Satou M."/>
            <person name="Toyoda T."/>
            <person name="Konagaya A."/>
            <person name="Carninci P."/>
            <person name="Kawai J."/>
            <person name="Hayashizaki Y."/>
            <person name="Shinozaki K."/>
        </authorList>
    </citation>
    <scope>NUCLEOTIDE SEQUENCE [LARGE SCALE MRNA]</scope>
    <source>
        <strain>cv. Columbia</strain>
    </source>
</reference>
<reference key="6">
    <citation type="journal article" date="1997" name="FEBS Lett.">
        <title>Differential expression of genes coding for ABC transporters after treatment of Arabidopsis thaliana with xenobiotics.</title>
        <authorList>
            <person name="Tommasini R."/>
            <person name="Vogt E."/>
            <person name="Schmid J."/>
            <person name="Fromentau M."/>
            <person name="Amrhein N."/>
            <person name="Martinoia E."/>
        </authorList>
    </citation>
    <scope>NUCLEOTIDE SEQUENCE [MRNA] OF 1272-1516</scope>
    <scope>INDUCTION</scope>
</reference>
<reference key="7">
    <citation type="journal article" date="2001" name="J. Biol. Chem.">
        <title>The Arabidopsis thaliana ABC protein superfamily, a complete inventory.</title>
        <authorList>
            <person name="Sanchez-Fernandez R."/>
            <person name="Davies T.G."/>
            <person name="Coleman J.O."/>
            <person name="Rea P.A."/>
        </authorList>
    </citation>
    <scope>GENE FAMILY</scope>
    <scope>NOMENCLATURE</scope>
</reference>
<reference key="8">
    <citation type="journal article" date="2002" name="Planta">
        <title>Multifunctionality of plant ABC transporters -- more than just detoxifiers.</title>
        <authorList>
            <person name="Martinoia E."/>
            <person name="Klein M."/>
            <person name="Geisler M."/>
            <person name="Bovet L."/>
            <person name="Forestier C."/>
            <person name="Kolukisaoglu H.U."/>
            <person name="Mueller-Roeber B."/>
            <person name="Schulz B."/>
        </authorList>
    </citation>
    <scope>GENE FAMILY</scope>
</reference>
<reference key="9">
    <citation type="journal article" date="2002" name="Planta">
        <title>Family business: the multidrug-resistance related protein (MRP) ABC transporter genes in Arabidopsis thaliana.</title>
        <authorList>
            <person name="Kolukisaoglu U.H."/>
            <person name="Bovet L."/>
            <person name="Klein M."/>
            <person name="Eggmann T."/>
            <person name="Geisler M."/>
            <person name="Wanke D."/>
            <person name="Martinoia E."/>
            <person name="Schulz B."/>
        </authorList>
    </citation>
    <scope>TISSUE SPECIFICITY</scope>
    <scope>INDUCTION</scope>
</reference>
<reference key="10">
    <citation type="journal article" date="2004" name="Plant J.">
        <title>Disruption of AtMRP4, a guard cell plasma membrane ABCC-type ABC transporter, leads to deregulation of stomatal opening and increased drought susceptibility.</title>
        <authorList>
            <person name="Klein M."/>
            <person name="Geisler M."/>
            <person name="Suh S.J."/>
            <person name="Kolukisaoglu U.H."/>
            <person name="Azevedo L."/>
            <person name="Plaza S."/>
            <person name="Curtis M.D."/>
            <person name="Richter A."/>
            <person name="Weder B."/>
            <person name="Schulz B."/>
            <person name="Martinoia E."/>
        </authorList>
    </citation>
    <scope>TISSUE SPECIFICITY</scope>
    <scope>SUBCELLULAR LOCATION</scope>
    <scope>ACTIVITY REGULATION</scope>
    <scope>FUNCTION</scope>
    <scope>DISRUPTION PHENOTYPE</scope>
</reference>
<reference key="11">
    <citation type="journal article" date="2007" name="Mol. Cell. Proteomics">
        <title>A proteomics dissection of Arabidopsis thaliana vacuoles isolated from cell culture.</title>
        <authorList>
            <person name="Jaquinod M."/>
            <person name="Villiers F."/>
            <person name="Kieffer-Jaquinod S."/>
            <person name="Hugouvieux V."/>
            <person name="Bruley C."/>
            <person name="Garin J."/>
            <person name="Bourguignon J."/>
        </authorList>
    </citation>
    <scope>IDENTIFICATION BY MASS SPECTROMETRY</scope>
    <scope>SUBCELLULAR LOCATION [LARGE SCALE ANALYSIS]</scope>
</reference>
<reference key="12">
    <citation type="journal article" date="2008" name="Trends Plant Sci.">
        <title>Plant ABC proteins - a unified nomenclature and updated inventory.</title>
        <authorList>
            <person name="Verrier P.J."/>
            <person name="Bird D."/>
            <person name="Burla B."/>
            <person name="Dassa E."/>
            <person name="Forestier C."/>
            <person name="Geisler M."/>
            <person name="Klein M."/>
            <person name="Kolukisaoglu H.U."/>
            <person name="Lee Y."/>
            <person name="Martinoia E."/>
            <person name="Murphy A."/>
            <person name="Rea P.A."/>
            <person name="Samuels L."/>
            <person name="Schulz B."/>
            <person name="Spalding E.J."/>
            <person name="Yazaki K."/>
            <person name="Theodoulou F.L."/>
        </authorList>
    </citation>
    <scope>GENE FAMILY</scope>
    <scope>NOMENCLATURE</scope>
</reference>
<evidence type="ECO:0000255" key="1"/>
<evidence type="ECO:0000255" key="2">
    <source>
        <dbReference type="PROSITE-ProRule" id="PRU00434"/>
    </source>
</evidence>
<evidence type="ECO:0000255" key="3">
    <source>
        <dbReference type="PROSITE-ProRule" id="PRU00441"/>
    </source>
</evidence>
<evidence type="ECO:0000256" key="4">
    <source>
        <dbReference type="SAM" id="MobiDB-lite"/>
    </source>
</evidence>
<evidence type="ECO:0000269" key="5">
    <source>
    </source>
</evidence>
<evidence type="ECO:0000269" key="6">
    <source>
    </source>
</evidence>
<evidence type="ECO:0000269" key="7">
    <source>
    </source>
</evidence>
<evidence type="ECO:0000269" key="8">
    <source>
    </source>
</evidence>
<evidence type="ECO:0000269" key="9">
    <source>
    </source>
</evidence>
<evidence type="ECO:0000305" key="10"/>